<evidence type="ECO:0000255" key="1">
    <source>
        <dbReference type="HAMAP-Rule" id="MF_01454"/>
    </source>
</evidence>
<evidence type="ECO:0000255" key="2">
    <source>
        <dbReference type="PROSITE-ProRule" id="PRU01229"/>
    </source>
</evidence>
<evidence type="ECO:0000255" key="3">
    <source>
        <dbReference type="PROSITE-ProRule" id="PRU01231"/>
    </source>
</evidence>
<comment type="function">
    <text evidence="1">An essential GTPase which binds GTP, GDP and possibly (p)ppGpp with moderate affinity, with high nucleotide exchange rates and a fairly low GTP hydrolysis rate. Plays a role in control of the cell cycle, stress response, ribosome biogenesis and in those bacteria that undergo differentiation, in morphogenesis control.</text>
</comment>
<comment type="cofactor">
    <cofactor evidence="1">
        <name>Mg(2+)</name>
        <dbReference type="ChEBI" id="CHEBI:18420"/>
    </cofactor>
</comment>
<comment type="subunit">
    <text evidence="1">Monomer.</text>
</comment>
<comment type="subcellular location">
    <subcellularLocation>
        <location evidence="1">Cytoplasm</location>
    </subcellularLocation>
</comment>
<comment type="similarity">
    <text evidence="1">Belongs to the TRAFAC class OBG-HflX-like GTPase superfamily. OBG GTPase family.</text>
</comment>
<protein>
    <recommendedName>
        <fullName evidence="1">GTPase Obg</fullName>
        <ecNumber evidence="1">3.6.5.-</ecNumber>
    </recommendedName>
    <alternativeName>
        <fullName evidence="1">GTP-binding protein Obg</fullName>
    </alternativeName>
</protein>
<feature type="chain" id="PRO_0000386351" description="GTPase Obg">
    <location>
        <begin position="1"/>
        <end position="467"/>
    </location>
</feature>
<feature type="domain" description="Obg" evidence="3">
    <location>
        <begin position="1"/>
        <end position="158"/>
    </location>
</feature>
<feature type="domain" description="OBG-type G" evidence="1">
    <location>
        <begin position="159"/>
        <end position="333"/>
    </location>
</feature>
<feature type="domain" description="OCT" evidence="2">
    <location>
        <begin position="352"/>
        <end position="430"/>
    </location>
</feature>
<feature type="binding site" evidence="1">
    <location>
        <begin position="165"/>
        <end position="172"/>
    </location>
    <ligand>
        <name>GTP</name>
        <dbReference type="ChEBI" id="CHEBI:37565"/>
    </ligand>
</feature>
<feature type="binding site" evidence="1">
    <location>
        <position position="172"/>
    </location>
    <ligand>
        <name>Mg(2+)</name>
        <dbReference type="ChEBI" id="CHEBI:18420"/>
    </ligand>
</feature>
<feature type="binding site" evidence="1">
    <location>
        <begin position="190"/>
        <end position="194"/>
    </location>
    <ligand>
        <name>GTP</name>
        <dbReference type="ChEBI" id="CHEBI:37565"/>
    </ligand>
</feature>
<feature type="binding site" evidence="1">
    <location>
        <position position="192"/>
    </location>
    <ligand>
        <name>Mg(2+)</name>
        <dbReference type="ChEBI" id="CHEBI:18420"/>
    </ligand>
</feature>
<feature type="binding site" evidence="1">
    <location>
        <begin position="214"/>
        <end position="217"/>
    </location>
    <ligand>
        <name>GTP</name>
        <dbReference type="ChEBI" id="CHEBI:37565"/>
    </ligand>
</feature>
<feature type="binding site" evidence="1">
    <location>
        <begin position="285"/>
        <end position="288"/>
    </location>
    <ligand>
        <name>GTP</name>
        <dbReference type="ChEBI" id="CHEBI:37565"/>
    </ligand>
</feature>
<feature type="binding site" evidence="1">
    <location>
        <begin position="314"/>
        <end position="316"/>
    </location>
    <ligand>
        <name>GTP</name>
        <dbReference type="ChEBI" id="CHEBI:37565"/>
    </ligand>
</feature>
<proteinExistence type="inferred from homology"/>
<gene>
    <name evidence="1" type="primary">obg</name>
    <name type="ordered locus">trd_1712</name>
</gene>
<organism>
    <name type="scientific">Thermomicrobium roseum (strain ATCC 27502 / DSM 5159 / P-2)</name>
    <dbReference type="NCBI Taxonomy" id="309801"/>
    <lineage>
        <taxon>Bacteria</taxon>
        <taxon>Pseudomonadati</taxon>
        <taxon>Thermomicrobiota</taxon>
        <taxon>Thermomicrobia</taxon>
        <taxon>Thermomicrobiales</taxon>
        <taxon>Thermomicrobiaceae</taxon>
        <taxon>Thermomicrobium</taxon>
    </lineage>
</organism>
<dbReference type="EC" id="3.6.5.-" evidence="1"/>
<dbReference type="EMBL" id="CP001275">
    <property type="protein sequence ID" value="ACM05030.1"/>
    <property type="molecule type" value="Genomic_DNA"/>
</dbReference>
<dbReference type="SMR" id="B9L101"/>
<dbReference type="STRING" id="309801.trd_1712"/>
<dbReference type="KEGG" id="tro:trd_1712"/>
<dbReference type="eggNOG" id="COG0536">
    <property type="taxonomic scope" value="Bacteria"/>
</dbReference>
<dbReference type="HOGENOM" id="CLU_011747_2_1_0"/>
<dbReference type="OrthoDB" id="9807318at2"/>
<dbReference type="Proteomes" id="UP000000447">
    <property type="component" value="Chromosome"/>
</dbReference>
<dbReference type="GO" id="GO:0005737">
    <property type="term" value="C:cytoplasm"/>
    <property type="evidence" value="ECO:0007669"/>
    <property type="project" value="UniProtKB-SubCell"/>
</dbReference>
<dbReference type="GO" id="GO:0005525">
    <property type="term" value="F:GTP binding"/>
    <property type="evidence" value="ECO:0007669"/>
    <property type="project" value="UniProtKB-UniRule"/>
</dbReference>
<dbReference type="GO" id="GO:0003924">
    <property type="term" value="F:GTPase activity"/>
    <property type="evidence" value="ECO:0007669"/>
    <property type="project" value="UniProtKB-UniRule"/>
</dbReference>
<dbReference type="GO" id="GO:0000287">
    <property type="term" value="F:magnesium ion binding"/>
    <property type="evidence" value="ECO:0007669"/>
    <property type="project" value="InterPro"/>
</dbReference>
<dbReference type="GO" id="GO:0042254">
    <property type="term" value="P:ribosome biogenesis"/>
    <property type="evidence" value="ECO:0007669"/>
    <property type="project" value="UniProtKB-UniRule"/>
</dbReference>
<dbReference type="CDD" id="cd01898">
    <property type="entry name" value="Obg"/>
    <property type="match status" value="1"/>
</dbReference>
<dbReference type="FunFam" id="2.70.210.12:FF:000001">
    <property type="entry name" value="GTPase Obg"/>
    <property type="match status" value="1"/>
</dbReference>
<dbReference type="Gene3D" id="3.30.300.350">
    <property type="entry name" value="GTP-binding protein OBG, C-terminal domain"/>
    <property type="match status" value="1"/>
</dbReference>
<dbReference type="Gene3D" id="2.70.210.12">
    <property type="entry name" value="GTP1/OBG domain"/>
    <property type="match status" value="1"/>
</dbReference>
<dbReference type="Gene3D" id="3.40.50.300">
    <property type="entry name" value="P-loop containing nucleotide triphosphate hydrolases"/>
    <property type="match status" value="1"/>
</dbReference>
<dbReference type="HAMAP" id="MF_01454">
    <property type="entry name" value="GTPase_Obg"/>
    <property type="match status" value="1"/>
</dbReference>
<dbReference type="InterPro" id="IPR031167">
    <property type="entry name" value="G_OBG"/>
</dbReference>
<dbReference type="InterPro" id="IPR006073">
    <property type="entry name" value="GTP-bd"/>
</dbReference>
<dbReference type="InterPro" id="IPR014100">
    <property type="entry name" value="GTP-bd_Obg/CgtA"/>
</dbReference>
<dbReference type="InterPro" id="IPR036346">
    <property type="entry name" value="GTP-bd_prot_GTP1/OBG_C_sf"/>
</dbReference>
<dbReference type="InterPro" id="IPR006169">
    <property type="entry name" value="GTP1_OBG_dom"/>
</dbReference>
<dbReference type="InterPro" id="IPR036726">
    <property type="entry name" value="GTP1_OBG_dom_sf"/>
</dbReference>
<dbReference type="InterPro" id="IPR045086">
    <property type="entry name" value="OBG_GTPase"/>
</dbReference>
<dbReference type="InterPro" id="IPR015349">
    <property type="entry name" value="OCT_dom"/>
</dbReference>
<dbReference type="InterPro" id="IPR027417">
    <property type="entry name" value="P-loop_NTPase"/>
</dbReference>
<dbReference type="NCBIfam" id="TIGR02729">
    <property type="entry name" value="Obg_CgtA"/>
    <property type="match status" value="1"/>
</dbReference>
<dbReference type="NCBIfam" id="TIGR03595">
    <property type="entry name" value="Obg_CgtA_exten"/>
    <property type="match status" value="1"/>
</dbReference>
<dbReference type="NCBIfam" id="NF008954">
    <property type="entry name" value="PRK12296.1"/>
    <property type="match status" value="1"/>
</dbReference>
<dbReference type="NCBIfam" id="NF008955">
    <property type="entry name" value="PRK12297.1"/>
    <property type="match status" value="1"/>
</dbReference>
<dbReference type="NCBIfam" id="NF008956">
    <property type="entry name" value="PRK12299.1"/>
    <property type="match status" value="1"/>
</dbReference>
<dbReference type="PANTHER" id="PTHR11702">
    <property type="entry name" value="DEVELOPMENTALLY REGULATED GTP-BINDING PROTEIN-RELATED"/>
    <property type="match status" value="1"/>
</dbReference>
<dbReference type="PANTHER" id="PTHR11702:SF31">
    <property type="entry name" value="MITOCHONDRIAL RIBOSOME-ASSOCIATED GTPASE 2"/>
    <property type="match status" value="1"/>
</dbReference>
<dbReference type="Pfam" id="PF09269">
    <property type="entry name" value="DUF1967"/>
    <property type="match status" value="1"/>
</dbReference>
<dbReference type="Pfam" id="PF01018">
    <property type="entry name" value="GTP1_OBG"/>
    <property type="match status" value="1"/>
</dbReference>
<dbReference type="Pfam" id="PF01926">
    <property type="entry name" value="MMR_HSR1"/>
    <property type="match status" value="1"/>
</dbReference>
<dbReference type="PRINTS" id="PR00326">
    <property type="entry name" value="GTP1OBG"/>
</dbReference>
<dbReference type="SUPFAM" id="SSF102741">
    <property type="entry name" value="Obg GTP-binding protein C-terminal domain"/>
    <property type="match status" value="1"/>
</dbReference>
<dbReference type="SUPFAM" id="SSF82051">
    <property type="entry name" value="Obg GTP-binding protein N-terminal domain"/>
    <property type="match status" value="1"/>
</dbReference>
<dbReference type="SUPFAM" id="SSF52540">
    <property type="entry name" value="P-loop containing nucleoside triphosphate hydrolases"/>
    <property type="match status" value="1"/>
</dbReference>
<dbReference type="PROSITE" id="PS51710">
    <property type="entry name" value="G_OBG"/>
    <property type="match status" value="1"/>
</dbReference>
<dbReference type="PROSITE" id="PS51883">
    <property type="entry name" value="OBG"/>
    <property type="match status" value="1"/>
</dbReference>
<dbReference type="PROSITE" id="PS51881">
    <property type="entry name" value="OCT"/>
    <property type="match status" value="1"/>
</dbReference>
<name>OBG_THERP</name>
<reference key="1">
    <citation type="journal article" date="2009" name="PLoS ONE">
        <title>Complete genome sequence of the aerobic CO-oxidizing thermophile Thermomicrobium roseum.</title>
        <authorList>
            <person name="Wu D."/>
            <person name="Raymond J."/>
            <person name="Wu M."/>
            <person name="Chatterji S."/>
            <person name="Ren Q."/>
            <person name="Graham J.E."/>
            <person name="Bryant D.A."/>
            <person name="Robb F."/>
            <person name="Colman A."/>
            <person name="Tallon L.J."/>
            <person name="Badger J.H."/>
            <person name="Madupu R."/>
            <person name="Ward N.L."/>
            <person name="Eisen J.A."/>
        </authorList>
    </citation>
    <scope>NUCLEOTIDE SEQUENCE [LARGE SCALE GENOMIC DNA]</scope>
    <source>
        <strain>ATCC 27502 / DSM 5159 / P-2</strain>
    </source>
</reference>
<keyword id="KW-0963">Cytoplasm</keyword>
<keyword id="KW-0342">GTP-binding</keyword>
<keyword id="KW-0378">Hydrolase</keyword>
<keyword id="KW-0460">Magnesium</keyword>
<keyword id="KW-0479">Metal-binding</keyword>
<keyword id="KW-0547">Nucleotide-binding</keyword>
<keyword id="KW-1185">Reference proteome</keyword>
<accession>B9L101</accession>
<sequence>MFYDEAKIFVKAGNGGNGAVSFHREKYIPRGGPDGGDGGRGGNVYLRVDPSLNTLLPFSYQRQFRAEDGQPGQGNNKNGRDGADLYIDVPPGTVVYDEATGAVLGDLLEPGEVLLVARGGFGGRGNQHFATPSRQAPRFAEKGEPGEERWLRLELKLLADVGLVGLPNAGKSTLLAAVSAARPKIADYPFTTLEPMLGVVSVPGREGGTFVLADLPGLIAGASRGAGLGHEFLRHVERTRLLIHVLDGSGGLEGRDPLEDFHTINAELAAYSASLAGKPQIVAVNKMDLPEAQANWPRIARALDELGYTAYPISAATGQGVGELIRATWERLQQLPRPERVAPPLRSHRVYTLDRSQERWEAIRLSPHHFALRGPKIERLTLMTDFSNPEAAERYQRLLARWGISRRLLALGIQPGDIVHVAGRELVWEPELAEAEQTRPRRRLTKRERLLKRAGLLEEPEEEIGEQ</sequence>